<accession>P37890</accession>
<accession>A0A0P0Y8R8</accession>
<accession>Q2QUQ3</accession>
<dbReference type="EC" id="3.4.16.5"/>
<dbReference type="EMBL" id="D17586">
    <property type="protein sequence ID" value="BAA04510.1"/>
    <property type="molecule type" value="Genomic_DNA"/>
</dbReference>
<dbReference type="EMBL" id="DP000011">
    <property type="protein sequence ID" value="ABA96977.2"/>
    <property type="molecule type" value="Genomic_DNA"/>
</dbReference>
<dbReference type="EMBL" id="AP008218">
    <property type="protein sequence ID" value="BAF29529.1"/>
    <property type="molecule type" value="Genomic_DNA"/>
</dbReference>
<dbReference type="EMBL" id="AP014968">
    <property type="protein sequence ID" value="BAT16568.1"/>
    <property type="molecule type" value="Genomic_DNA"/>
</dbReference>
<dbReference type="EMBL" id="AK064874">
    <property type="status" value="NOT_ANNOTATED_CDS"/>
    <property type="molecule type" value="mRNA"/>
</dbReference>
<dbReference type="PIR" id="S43516">
    <property type="entry name" value="S43516"/>
</dbReference>
<dbReference type="RefSeq" id="XP_015618181.1">
    <property type="nucleotide sequence ID" value="XM_015762695.1"/>
</dbReference>
<dbReference type="SMR" id="P37890"/>
<dbReference type="FunCoup" id="P37890">
    <property type="interactions" value="820"/>
</dbReference>
<dbReference type="ESTHER" id="orysa-cbp1">
    <property type="family name" value="Carboxypeptidase_S10"/>
</dbReference>
<dbReference type="MEROPS" id="S10.004"/>
<dbReference type="GlyCosmos" id="P37890">
    <property type="glycosylation" value="3 sites, No reported glycans"/>
</dbReference>
<dbReference type="PaxDb" id="39947-P37890"/>
<dbReference type="EnsemblPlants" id="Os12t0257000-01">
    <property type="protein sequence ID" value="Os12t0257000-01"/>
    <property type="gene ID" value="Os12g0257000"/>
</dbReference>
<dbReference type="Gramene" id="Os12t0257000-01">
    <property type="protein sequence ID" value="Os12t0257000-01"/>
    <property type="gene ID" value="Os12g0257000"/>
</dbReference>
<dbReference type="KEGG" id="dosa:Os12g0257000"/>
<dbReference type="eggNOG" id="KOG1282">
    <property type="taxonomic scope" value="Eukaryota"/>
</dbReference>
<dbReference type="HOGENOM" id="CLU_008523_0_1_1"/>
<dbReference type="InParanoid" id="P37890"/>
<dbReference type="OMA" id="GRFLHYW"/>
<dbReference type="OrthoDB" id="443318at2759"/>
<dbReference type="Proteomes" id="UP000000763">
    <property type="component" value="Chromosome 12"/>
</dbReference>
<dbReference type="Proteomes" id="UP000059680">
    <property type="component" value="Chromosome 12"/>
</dbReference>
<dbReference type="ExpressionAtlas" id="P37890">
    <property type="expression patterns" value="baseline and differential"/>
</dbReference>
<dbReference type="GO" id="GO:0016747">
    <property type="term" value="F:acyltransferase activity, transferring groups other than amino-acyl groups"/>
    <property type="evidence" value="ECO:0000318"/>
    <property type="project" value="GO_Central"/>
</dbReference>
<dbReference type="GO" id="GO:0004185">
    <property type="term" value="F:serine-type carboxypeptidase activity"/>
    <property type="evidence" value="ECO:0007669"/>
    <property type="project" value="UniProtKB-EC"/>
</dbReference>
<dbReference type="GO" id="GO:0006508">
    <property type="term" value="P:proteolysis"/>
    <property type="evidence" value="ECO:0007669"/>
    <property type="project" value="UniProtKB-KW"/>
</dbReference>
<dbReference type="GO" id="GO:0019748">
    <property type="term" value="P:secondary metabolic process"/>
    <property type="evidence" value="ECO:0000318"/>
    <property type="project" value="GO_Central"/>
</dbReference>
<dbReference type="FunFam" id="3.40.50.11320:FF:000002">
    <property type="entry name" value="Carboxypeptidase"/>
    <property type="match status" value="1"/>
</dbReference>
<dbReference type="FunFam" id="3.40.50.12670:FF:000001">
    <property type="entry name" value="Carboxypeptidase"/>
    <property type="match status" value="1"/>
</dbReference>
<dbReference type="FunFam" id="3.40.50.1820:FF:000143">
    <property type="entry name" value="Carboxypeptidase"/>
    <property type="match status" value="1"/>
</dbReference>
<dbReference type="Gene3D" id="3.40.50.12670">
    <property type="match status" value="1"/>
</dbReference>
<dbReference type="Gene3D" id="3.40.50.1820">
    <property type="entry name" value="alpha/beta hydrolase"/>
    <property type="match status" value="1"/>
</dbReference>
<dbReference type="InterPro" id="IPR029058">
    <property type="entry name" value="AB_hydrolase_fold"/>
</dbReference>
<dbReference type="InterPro" id="IPR001563">
    <property type="entry name" value="Peptidase_S10"/>
</dbReference>
<dbReference type="InterPro" id="IPR033124">
    <property type="entry name" value="Ser_caboxypep_his_AS"/>
</dbReference>
<dbReference type="InterPro" id="IPR018202">
    <property type="entry name" value="Ser_caboxypep_ser_AS"/>
</dbReference>
<dbReference type="PANTHER" id="PTHR11802:SF254">
    <property type="entry name" value="SERINE CARBOXYPEPTIDASE-LIKE 20"/>
    <property type="match status" value="1"/>
</dbReference>
<dbReference type="PANTHER" id="PTHR11802">
    <property type="entry name" value="SERINE PROTEASE FAMILY S10 SERINE CARBOXYPEPTIDASE"/>
    <property type="match status" value="1"/>
</dbReference>
<dbReference type="Pfam" id="PF00450">
    <property type="entry name" value="Peptidase_S10"/>
    <property type="match status" value="1"/>
</dbReference>
<dbReference type="PRINTS" id="PR00724">
    <property type="entry name" value="CRBOXYPTASEC"/>
</dbReference>
<dbReference type="SUPFAM" id="SSF53474">
    <property type="entry name" value="alpha/beta-Hydrolases"/>
    <property type="match status" value="1"/>
</dbReference>
<dbReference type="PROSITE" id="PS00560">
    <property type="entry name" value="CARBOXYPEPT_SER_HIS"/>
    <property type="match status" value="1"/>
</dbReference>
<dbReference type="PROSITE" id="PS00131">
    <property type="entry name" value="CARBOXYPEPT_SER_SER"/>
    <property type="match status" value="1"/>
</dbReference>
<protein>
    <recommendedName>
        <fullName>Serine carboxypeptidase 1</fullName>
        <ecNumber>3.4.16.5</ecNumber>
    </recommendedName>
    <alternativeName>
        <fullName>Carboxypeptidase C</fullName>
    </alternativeName>
    <alternativeName>
        <fullName>Serine carboxypeptidase I</fullName>
    </alternativeName>
    <component>
        <recommendedName>
            <fullName>Serine carboxypeptidase 1 chain A</fullName>
        </recommendedName>
        <alternativeName>
            <fullName>Serine carboxypeptidase I chain A</fullName>
        </alternativeName>
    </component>
    <component>
        <recommendedName>
            <fullName>Serine carboxypeptidase 1 chain B</fullName>
        </recommendedName>
        <alternativeName>
            <fullName>Serine carboxypeptidase I chain B</fullName>
        </alternativeName>
    </component>
</protein>
<gene>
    <name type="primary">CBP1</name>
    <name type="ordered locus">Os12g0257000</name>
    <name type="ordered locus">LOC_Os12g15470</name>
</gene>
<name>CBP1_ORYSJ</name>
<sequence length="510" mass="55710">MARRGRRSLASPAVAIALFVFLAYGGGGGGGGVCEAAPASAVVKSVPGFDGALPSKHYAGYVTVEEQHGRNLFYYLVESERDPAKDPLVLWLNGGPGCSSFDGFVYEHGPFNFESGGSAKSLPKLHLNPYSWSKVSSVIYLDSPAGVGLSYSKNTSDYNTGDLKTAADSHTFLLKWFQLYPEFLSNPFYIAGESYAGVYVPTLSHEVVKGLHDGVKPTINFKGYMVGNGVCDTVFDGNALVPFAHGMALISDDIYQEAQTACHGNYWNTTTDKCENALYKVDTSINDLNIYDILEPCYHSKTIKKVTPANTKLPKSFQHLGTTTKPLAVRTRMHGRAWPLRAPVRAGRVPSWQEFARGSRPSGVPCMSDEVATAWLNNDDVRAAIHAQPVSSIGSWLICTNVLDFIHDAGSMISYHKNLTGQGYRAFIYSGDHDMCVPYTGTEAWTRSLGYGVIDSWRPWHLNGQVSGYTQGYEHGLTFATIKGAGHTVPEYKPQESLAFYSRWLAGSKL</sequence>
<keyword id="KW-0121">Carboxypeptidase</keyword>
<keyword id="KW-1015">Disulfide bond</keyword>
<keyword id="KW-0325">Glycoprotein</keyword>
<keyword id="KW-0378">Hydrolase</keyword>
<keyword id="KW-0645">Protease</keyword>
<keyword id="KW-1185">Reference proteome</keyword>
<keyword id="KW-0732">Signal</keyword>
<keyword id="KW-0865">Zymogen</keyword>
<reference key="1">
    <citation type="journal article" date="1994" name="Biochim. Biophys. Acta">
        <title>Cloning and sequencing of the gene for type I carboxypeptidase in rice.</title>
        <authorList>
            <person name="Washio K."/>
            <person name="Ishikawa K."/>
        </authorList>
    </citation>
    <scope>NUCLEOTIDE SEQUENCE [GENOMIC DNA]</scope>
    <source>
        <strain>cv. Yukihikari</strain>
    </source>
</reference>
<reference key="2">
    <citation type="journal article" date="2005" name="BMC Biol.">
        <title>The sequence of rice chromosomes 11 and 12, rich in disease resistance genes and recent gene duplications.</title>
        <authorList>
            <consortium name="The rice chromosomes 11 and 12 sequencing consortia"/>
        </authorList>
    </citation>
    <scope>NUCLEOTIDE SEQUENCE [LARGE SCALE GENOMIC DNA]</scope>
    <source>
        <strain>cv. Nipponbare</strain>
    </source>
</reference>
<reference key="3">
    <citation type="journal article" date="2005" name="Nature">
        <title>The map-based sequence of the rice genome.</title>
        <authorList>
            <consortium name="International rice genome sequencing project (IRGSP)"/>
        </authorList>
    </citation>
    <scope>NUCLEOTIDE SEQUENCE [LARGE SCALE GENOMIC DNA]</scope>
    <source>
        <strain>cv. Nipponbare</strain>
    </source>
</reference>
<reference key="4">
    <citation type="journal article" date="2008" name="Nucleic Acids Res.">
        <title>The rice annotation project database (RAP-DB): 2008 update.</title>
        <authorList>
            <consortium name="The rice annotation project (RAP)"/>
        </authorList>
    </citation>
    <scope>GENOME REANNOTATION</scope>
    <source>
        <strain>cv. Nipponbare</strain>
    </source>
</reference>
<reference key="5">
    <citation type="journal article" date="2013" name="Rice">
        <title>Improvement of the Oryza sativa Nipponbare reference genome using next generation sequence and optical map data.</title>
        <authorList>
            <person name="Kawahara Y."/>
            <person name="de la Bastide M."/>
            <person name="Hamilton J.P."/>
            <person name="Kanamori H."/>
            <person name="McCombie W.R."/>
            <person name="Ouyang S."/>
            <person name="Schwartz D.C."/>
            <person name="Tanaka T."/>
            <person name="Wu J."/>
            <person name="Zhou S."/>
            <person name="Childs K.L."/>
            <person name="Davidson R.M."/>
            <person name="Lin H."/>
            <person name="Quesada-Ocampo L."/>
            <person name="Vaillancourt B."/>
            <person name="Sakai H."/>
            <person name="Lee S.S."/>
            <person name="Kim J."/>
            <person name="Numa H."/>
            <person name="Itoh T."/>
            <person name="Buell C.R."/>
            <person name="Matsumoto T."/>
        </authorList>
    </citation>
    <scope>GENOME REANNOTATION</scope>
    <source>
        <strain>cv. Nipponbare</strain>
    </source>
</reference>
<reference key="6">
    <citation type="journal article" date="2003" name="Science">
        <title>Collection, mapping, and annotation of over 28,000 cDNA clones from japonica rice.</title>
        <authorList>
            <consortium name="The rice full-length cDNA consortium"/>
        </authorList>
    </citation>
    <scope>NUCLEOTIDE SEQUENCE [LARGE SCALE MRNA]</scope>
    <source>
        <strain>cv. Nipponbare</strain>
    </source>
</reference>
<feature type="signal peptide" evidence="2">
    <location>
        <begin position="1"/>
        <end position="25"/>
    </location>
</feature>
<feature type="propeptide" id="PRO_0000004304" evidence="2">
    <location>
        <begin position="26"/>
        <end position="36"/>
    </location>
</feature>
<feature type="chain" id="PRO_0000004305" description="Serine carboxypeptidase 1">
    <location>
        <begin position="37"/>
        <end position="510"/>
    </location>
</feature>
<feature type="chain" id="PRO_0000274566" description="Serine carboxypeptidase 1 chain A" evidence="1">
    <location>
        <begin position="37"/>
        <end position="302"/>
    </location>
</feature>
<feature type="propeptide" id="PRO_0000274567" description="Linker peptide" evidence="1">
    <location>
        <begin position="303"/>
        <end position="362"/>
    </location>
</feature>
<feature type="chain" id="PRO_0000274568" description="Serine carboxypeptidase 1 chain B" evidence="1">
    <location>
        <begin position="363"/>
        <end position="510"/>
    </location>
</feature>
<feature type="short sequence motif" description="Microbody targeting signal" evidence="2">
    <location>
        <begin position="508"/>
        <end position="510"/>
    </location>
</feature>
<feature type="active site" evidence="1">
    <location>
        <position position="194"/>
    </location>
</feature>
<feature type="active site" evidence="1">
    <location>
        <position position="434"/>
    </location>
</feature>
<feature type="active site" evidence="1">
    <location>
        <position position="487"/>
    </location>
</feature>
<feature type="glycosylation site" description="N-linked (GlcNAc...) asparagine" evidence="2">
    <location>
        <position position="154"/>
    </location>
</feature>
<feature type="glycosylation site" description="N-linked (GlcNAc...) asparagine" evidence="2">
    <location>
        <position position="268"/>
    </location>
</feature>
<feature type="glycosylation site" description="N-linked (GlcNAc...) asparagine" evidence="2">
    <location>
        <position position="418"/>
    </location>
</feature>
<feature type="disulfide bond" description="Interchain (between A and B chains)" evidence="1">
    <location>
        <begin position="98"/>
        <end position="399"/>
    </location>
</feature>
<feature type="disulfide bond" evidence="1">
    <location>
        <begin position="262"/>
        <end position="274"/>
    </location>
</feature>
<feature type="disulfide bond" description="Interchain (between A and B chains)" evidence="1">
    <location>
        <begin position="297"/>
        <end position="366"/>
    </location>
</feature>
<feature type="sequence conflict" description="In Ref. 6; AK064874." evidence="5" ref="6">
    <original>D</original>
    <variation>G</variation>
    <location>
        <position position="253"/>
    </location>
</feature>
<organism>
    <name type="scientific">Oryza sativa subsp. japonica</name>
    <name type="common">Rice</name>
    <dbReference type="NCBI Taxonomy" id="39947"/>
    <lineage>
        <taxon>Eukaryota</taxon>
        <taxon>Viridiplantae</taxon>
        <taxon>Streptophyta</taxon>
        <taxon>Embryophyta</taxon>
        <taxon>Tracheophyta</taxon>
        <taxon>Spermatophyta</taxon>
        <taxon>Magnoliopsida</taxon>
        <taxon>Liliopsida</taxon>
        <taxon>Poales</taxon>
        <taxon>Poaceae</taxon>
        <taxon>BOP clade</taxon>
        <taxon>Oryzoideae</taxon>
        <taxon>Oryzeae</taxon>
        <taxon>Oryzinae</taxon>
        <taxon>Oryza</taxon>
        <taxon>Oryza sativa</taxon>
    </lineage>
</organism>
<proteinExistence type="evidence at transcript level"/>
<comment type="catalytic activity">
    <reaction evidence="3 4">
        <text>Release of a C-terminal amino acid with broad specificity.</text>
        <dbReference type="EC" id="3.4.16.5"/>
    </reaction>
</comment>
<comment type="similarity">
    <text evidence="5">Belongs to the peptidase S10 family.</text>
</comment>
<evidence type="ECO:0000250" key="1"/>
<evidence type="ECO:0000255" key="2"/>
<evidence type="ECO:0000255" key="3">
    <source>
        <dbReference type="PROSITE-ProRule" id="PRU10074"/>
    </source>
</evidence>
<evidence type="ECO:0000255" key="4">
    <source>
        <dbReference type="PROSITE-ProRule" id="PRU10075"/>
    </source>
</evidence>
<evidence type="ECO:0000305" key="5"/>